<organism>
    <name type="scientific">Tropheryma whipplei (strain TW08/27)</name>
    <name type="common">Whipple's bacillus</name>
    <dbReference type="NCBI Taxonomy" id="218496"/>
    <lineage>
        <taxon>Bacteria</taxon>
        <taxon>Bacillati</taxon>
        <taxon>Actinomycetota</taxon>
        <taxon>Actinomycetes</taxon>
        <taxon>Micrococcales</taxon>
        <taxon>Tropherymataceae</taxon>
        <taxon>Tropheryma</taxon>
    </lineage>
</organism>
<reference key="1">
    <citation type="journal article" date="2003" name="Lancet">
        <title>Sequencing and analysis of the genome of the Whipple's disease bacterium Tropheryma whipplei.</title>
        <authorList>
            <person name="Bentley S.D."/>
            <person name="Maiwald M."/>
            <person name="Murphy L.D."/>
            <person name="Pallen M.J."/>
            <person name="Yeats C.A."/>
            <person name="Dover L.G."/>
            <person name="Norbertczak H.T."/>
            <person name="Besra G.S."/>
            <person name="Quail M.A."/>
            <person name="Harris D.E."/>
            <person name="von Herbay A."/>
            <person name="Goble A."/>
            <person name="Rutter S."/>
            <person name="Squares R."/>
            <person name="Squares S."/>
            <person name="Barrell B.G."/>
            <person name="Parkhill J."/>
            <person name="Relman D.A."/>
        </authorList>
    </citation>
    <scope>NUCLEOTIDE SEQUENCE [LARGE SCALE GENOMIC DNA]</scope>
    <source>
        <strain>TW08/27</strain>
    </source>
</reference>
<feature type="chain" id="PRO_0000146626" description="Small ribosomal subunit protein uS10">
    <location>
        <begin position="1"/>
        <end position="102"/>
    </location>
</feature>
<proteinExistence type="inferred from homology"/>
<gene>
    <name evidence="1" type="primary">rpsJ</name>
    <name type="ordered locus">TW206</name>
</gene>
<name>RS10_TROW8</name>
<accession>Q83I79</accession>
<evidence type="ECO:0000255" key="1">
    <source>
        <dbReference type="HAMAP-Rule" id="MF_00508"/>
    </source>
</evidence>
<evidence type="ECO:0000305" key="2"/>
<comment type="function">
    <text evidence="1">Involved in the binding of tRNA to the ribosomes.</text>
</comment>
<comment type="subunit">
    <text evidence="1">Part of the 30S ribosomal subunit.</text>
</comment>
<comment type="similarity">
    <text evidence="1">Belongs to the universal ribosomal protein uS10 family.</text>
</comment>
<keyword id="KW-0687">Ribonucleoprotein</keyword>
<keyword id="KW-0689">Ribosomal protein</keyword>
<dbReference type="EMBL" id="BX251410">
    <property type="protein sequence ID" value="CAD66883.1"/>
    <property type="molecule type" value="Genomic_DNA"/>
</dbReference>
<dbReference type="RefSeq" id="WP_011096164.1">
    <property type="nucleotide sequence ID" value="NC_004551.1"/>
</dbReference>
<dbReference type="SMR" id="Q83I79"/>
<dbReference type="GeneID" id="67387982"/>
<dbReference type="KEGG" id="tws:TW206"/>
<dbReference type="HOGENOM" id="CLU_122625_1_3_11"/>
<dbReference type="GO" id="GO:1990904">
    <property type="term" value="C:ribonucleoprotein complex"/>
    <property type="evidence" value="ECO:0007669"/>
    <property type="project" value="UniProtKB-KW"/>
</dbReference>
<dbReference type="GO" id="GO:0005840">
    <property type="term" value="C:ribosome"/>
    <property type="evidence" value="ECO:0007669"/>
    <property type="project" value="UniProtKB-KW"/>
</dbReference>
<dbReference type="GO" id="GO:0003735">
    <property type="term" value="F:structural constituent of ribosome"/>
    <property type="evidence" value="ECO:0007669"/>
    <property type="project" value="InterPro"/>
</dbReference>
<dbReference type="GO" id="GO:0000049">
    <property type="term" value="F:tRNA binding"/>
    <property type="evidence" value="ECO:0007669"/>
    <property type="project" value="UniProtKB-UniRule"/>
</dbReference>
<dbReference type="GO" id="GO:0006412">
    <property type="term" value="P:translation"/>
    <property type="evidence" value="ECO:0007669"/>
    <property type="project" value="UniProtKB-UniRule"/>
</dbReference>
<dbReference type="FunFam" id="3.30.70.600:FF:000003">
    <property type="entry name" value="30S ribosomal protein S10"/>
    <property type="match status" value="1"/>
</dbReference>
<dbReference type="Gene3D" id="3.30.70.600">
    <property type="entry name" value="Ribosomal protein S10 domain"/>
    <property type="match status" value="1"/>
</dbReference>
<dbReference type="HAMAP" id="MF_00508">
    <property type="entry name" value="Ribosomal_uS10"/>
    <property type="match status" value="1"/>
</dbReference>
<dbReference type="InterPro" id="IPR001848">
    <property type="entry name" value="Ribosomal_uS10"/>
</dbReference>
<dbReference type="InterPro" id="IPR018268">
    <property type="entry name" value="Ribosomal_uS10_CS"/>
</dbReference>
<dbReference type="InterPro" id="IPR027486">
    <property type="entry name" value="Ribosomal_uS10_dom"/>
</dbReference>
<dbReference type="InterPro" id="IPR036838">
    <property type="entry name" value="Ribosomal_uS10_dom_sf"/>
</dbReference>
<dbReference type="NCBIfam" id="NF001861">
    <property type="entry name" value="PRK00596.1"/>
    <property type="match status" value="1"/>
</dbReference>
<dbReference type="NCBIfam" id="TIGR01049">
    <property type="entry name" value="rpsJ_bact"/>
    <property type="match status" value="1"/>
</dbReference>
<dbReference type="PANTHER" id="PTHR11700">
    <property type="entry name" value="30S RIBOSOMAL PROTEIN S10 FAMILY MEMBER"/>
    <property type="match status" value="1"/>
</dbReference>
<dbReference type="Pfam" id="PF00338">
    <property type="entry name" value="Ribosomal_S10"/>
    <property type="match status" value="1"/>
</dbReference>
<dbReference type="PRINTS" id="PR00971">
    <property type="entry name" value="RIBOSOMALS10"/>
</dbReference>
<dbReference type="SMART" id="SM01403">
    <property type="entry name" value="Ribosomal_S10"/>
    <property type="match status" value="1"/>
</dbReference>
<dbReference type="SUPFAM" id="SSF54999">
    <property type="entry name" value="Ribosomal protein S10"/>
    <property type="match status" value="1"/>
</dbReference>
<dbReference type="PROSITE" id="PS00361">
    <property type="entry name" value="RIBOSOMAL_S10"/>
    <property type="match status" value="1"/>
</dbReference>
<sequence length="102" mass="11648">MEEQKIRIRLKSYSHEIIDVSAKKIVDTVTRAGATIVGPVPLPTKKSVVCVIRSPHRHKDSREHFEMRTHKRLINVVDLTPRAVDALMRLDLSSEVNVEIKL</sequence>
<protein>
    <recommendedName>
        <fullName evidence="1">Small ribosomal subunit protein uS10</fullName>
    </recommendedName>
    <alternativeName>
        <fullName evidence="2">30S ribosomal protein S10</fullName>
    </alternativeName>
</protein>